<organism>
    <name type="scientific">Escherichia coli (strain UTI89 / UPEC)</name>
    <dbReference type="NCBI Taxonomy" id="364106"/>
    <lineage>
        <taxon>Bacteria</taxon>
        <taxon>Pseudomonadati</taxon>
        <taxon>Pseudomonadota</taxon>
        <taxon>Gammaproteobacteria</taxon>
        <taxon>Enterobacterales</taxon>
        <taxon>Enterobacteriaceae</taxon>
        <taxon>Escherichia</taxon>
    </lineage>
</organism>
<proteinExistence type="inferred from homology"/>
<dbReference type="EMBL" id="CP000243">
    <property type="protein sequence ID" value="ABE09442.1"/>
    <property type="molecule type" value="Genomic_DNA"/>
</dbReference>
<dbReference type="RefSeq" id="WP_000626187.1">
    <property type="nucleotide sequence ID" value="NZ_CP064825.1"/>
</dbReference>
<dbReference type="SMR" id="Q1R5C2"/>
<dbReference type="GeneID" id="93778499"/>
<dbReference type="KEGG" id="eci:UTI89_C4013"/>
<dbReference type="HOGENOM" id="CLU_151816_0_0_6"/>
<dbReference type="Proteomes" id="UP000001952">
    <property type="component" value="Chromosome"/>
</dbReference>
<dbReference type="GO" id="GO:0005886">
    <property type="term" value="C:plasma membrane"/>
    <property type="evidence" value="ECO:0007669"/>
    <property type="project" value="UniProtKB-SubCell"/>
</dbReference>
<dbReference type="HAMAP" id="MF_01088">
    <property type="entry name" value="UspB"/>
    <property type="match status" value="1"/>
</dbReference>
<dbReference type="InterPro" id="IPR019598">
    <property type="entry name" value="Universal_stress_protein_B"/>
</dbReference>
<dbReference type="NCBIfam" id="NF003435">
    <property type="entry name" value="PRK04960.1"/>
    <property type="match status" value="1"/>
</dbReference>
<dbReference type="Pfam" id="PF10625">
    <property type="entry name" value="UspB"/>
    <property type="match status" value="1"/>
</dbReference>
<keyword id="KW-0997">Cell inner membrane</keyword>
<keyword id="KW-1003">Cell membrane</keyword>
<keyword id="KW-0472">Membrane</keyword>
<keyword id="KW-0812">Transmembrane</keyword>
<keyword id="KW-1133">Transmembrane helix</keyword>
<feature type="chain" id="PRO_1000064875" description="Universal stress protein B">
    <location>
        <begin position="1"/>
        <end position="111"/>
    </location>
</feature>
<feature type="transmembrane region" description="Helical" evidence="1">
    <location>
        <begin position="1"/>
        <end position="21"/>
    </location>
</feature>
<feature type="transmembrane region" description="Helical" evidence="1">
    <location>
        <begin position="90"/>
        <end position="110"/>
    </location>
</feature>
<accession>Q1R5C2</accession>
<name>USPB_ECOUT</name>
<comment type="subcellular location">
    <subcellularLocation>
        <location evidence="1">Cell inner membrane</location>
        <topology evidence="1">Multi-pass membrane protein</topology>
    </subcellularLocation>
</comment>
<comment type="similarity">
    <text evidence="1">Belongs to the universal stress protein B family.</text>
</comment>
<protein>
    <recommendedName>
        <fullName evidence="1">Universal stress protein B</fullName>
    </recommendedName>
</protein>
<gene>
    <name evidence="1" type="primary">uspB</name>
    <name type="ordered locus">UTI89_C4013</name>
</gene>
<evidence type="ECO:0000255" key="1">
    <source>
        <dbReference type="HAMAP-Rule" id="MF_01088"/>
    </source>
</evidence>
<reference key="1">
    <citation type="journal article" date="2006" name="Proc. Natl. Acad. Sci. U.S.A.">
        <title>Identification of genes subject to positive selection in uropathogenic strains of Escherichia coli: a comparative genomics approach.</title>
        <authorList>
            <person name="Chen S.L."/>
            <person name="Hung C.-S."/>
            <person name="Xu J."/>
            <person name="Reigstad C.S."/>
            <person name="Magrini V."/>
            <person name="Sabo A."/>
            <person name="Blasiar D."/>
            <person name="Bieri T."/>
            <person name="Meyer R.R."/>
            <person name="Ozersky P."/>
            <person name="Armstrong J.R."/>
            <person name="Fulton R.S."/>
            <person name="Latreille J.P."/>
            <person name="Spieth J."/>
            <person name="Hooton T.M."/>
            <person name="Mardis E.R."/>
            <person name="Hultgren S.J."/>
            <person name="Gordon J.I."/>
        </authorList>
    </citation>
    <scope>NUCLEOTIDE SEQUENCE [LARGE SCALE GENOMIC DNA]</scope>
    <source>
        <strain>UTI89 / UPEC</strain>
    </source>
</reference>
<sequence length="111" mass="13027">MISTVALFWALCVVCIVNMARYFSSLRALLVVLRNCDPLLYQYVDGGGFFTSHGQPNKQVRLVWYIYAQRYRDHHDDEFIRRCERVRRQFILTSALCGLVVVSLIALMIWH</sequence>